<keyword id="KW-0687">Ribonucleoprotein</keyword>
<keyword id="KW-0689">Ribosomal protein</keyword>
<dbReference type="EMBL" id="CR626927">
    <property type="protein sequence ID" value="CAH08427.1"/>
    <property type="molecule type" value="Genomic_DNA"/>
</dbReference>
<dbReference type="RefSeq" id="WP_005788406.1">
    <property type="nucleotide sequence ID" value="NZ_UFTH01000002.1"/>
</dbReference>
<dbReference type="SMR" id="Q5LBU1"/>
<dbReference type="PaxDb" id="272559-BF9343_2646"/>
<dbReference type="KEGG" id="bfs:BF9343_2646"/>
<dbReference type="eggNOG" id="COG0228">
    <property type="taxonomic scope" value="Bacteria"/>
</dbReference>
<dbReference type="HOGENOM" id="CLU_100590_0_0_10"/>
<dbReference type="Proteomes" id="UP000006731">
    <property type="component" value="Chromosome"/>
</dbReference>
<dbReference type="GO" id="GO:0005737">
    <property type="term" value="C:cytoplasm"/>
    <property type="evidence" value="ECO:0007669"/>
    <property type="project" value="UniProtKB-ARBA"/>
</dbReference>
<dbReference type="GO" id="GO:0015935">
    <property type="term" value="C:small ribosomal subunit"/>
    <property type="evidence" value="ECO:0007669"/>
    <property type="project" value="TreeGrafter"/>
</dbReference>
<dbReference type="GO" id="GO:0003735">
    <property type="term" value="F:structural constituent of ribosome"/>
    <property type="evidence" value="ECO:0007669"/>
    <property type="project" value="InterPro"/>
</dbReference>
<dbReference type="GO" id="GO:0006412">
    <property type="term" value="P:translation"/>
    <property type="evidence" value="ECO:0007669"/>
    <property type="project" value="UniProtKB-UniRule"/>
</dbReference>
<dbReference type="FunFam" id="3.30.1320.10:FF:000006">
    <property type="entry name" value="30S ribosomal protein S16"/>
    <property type="match status" value="1"/>
</dbReference>
<dbReference type="Gene3D" id="3.30.1320.10">
    <property type="match status" value="1"/>
</dbReference>
<dbReference type="HAMAP" id="MF_00385">
    <property type="entry name" value="Ribosomal_bS16"/>
    <property type="match status" value="1"/>
</dbReference>
<dbReference type="InterPro" id="IPR000307">
    <property type="entry name" value="Ribosomal_bS16"/>
</dbReference>
<dbReference type="InterPro" id="IPR023803">
    <property type="entry name" value="Ribosomal_bS16_dom_sf"/>
</dbReference>
<dbReference type="NCBIfam" id="NF011094">
    <property type="entry name" value="PRK14521.1"/>
    <property type="match status" value="1"/>
</dbReference>
<dbReference type="NCBIfam" id="TIGR00002">
    <property type="entry name" value="S16"/>
    <property type="match status" value="1"/>
</dbReference>
<dbReference type="PANTHER" id="PTHR12919">
    <property type="entry name" value="30S RIBOSOMAL PROTEIN S16"/>
    <property type="match status" value="1"/>
</dbReference>
<dbReference type="PANTHER" id="PTHR12919:SF20">
    <property type="entry name" value="SMALL RIBOSOMAL SUBUNIT PROTEIN BS16M"/>
    <property type="match status" value="1"/>
</dbReference>
<dbReference type="Pfam" id="PF00886">
    <property type="entry name" value="Ribosomal_S16"/>
    <property type="match status" value="1"/>
</dbReference>
<dbReference type="SUPFAM" id="SSF54565">
    <property type="entry name" value="Ribosomal protein S16"/>
    <property type="match status" value="1"/>
</dbReference>
<evidence type="ECO:0000255" key="1">
    <source>
        <dbReference type="HAMAP-Rule" id="MF_00385"/>
    </source>
</evidence>
<evidence type="ECO:0000256" key="2">
    <source>
        <dbReference type="SAM" id="MobiDB-lite"/>
    </source>
</evidence>
<evidence type="ECO:0000305" key="3"/>
<feature type="chain" id="PRO_0000243777" description="Small ribosomal subunit protein bS16">
    <location>
        <begin position="1"/>
        <end position="181"/>
    </location>
</feature>
<feature type="region of interest" description="Disordered" evidence="2">
    <location>
        <begin position="150"/>
        <end position="181"/>
    </location>
</feature>
<feature type="compositionally biased region" description="Low complexity" evidence="2">
    <location>
        <begin position="158"/>
        <end position="181"/>
    </location>
</feature>
<name>RS16_BACFN</name>
<reference key="1">
    <citation type="journal article" date="2005" name="Science">
        <title>Extensive DNA inversions in the B. fragilis genome control variable gene expression.</title>
        <authorList>
            <person name="Cerdeno-Tarraga A.-M."/>
            <person name="Patrick S."/>
            <person name="Crossman L.C."/>
            <person name="Blakely G."/>
            <person name="Abratt V."/>
            <person name="Lennard N."/>
            <person name="Poxton I."/>
            <person name="Duerden B."/>
            <person name="Harris B."/>
            <person name="Quail M.A."/>
            <person name="Barron A."/>
            <person name="Clark L."/>
            <person name="Corton C."/>
            <person name="Doggett J."/>
            <person name="Holden M.T.G."/>
            <person name="Larke N."/>
            <person name="Line A."/>
            <person name="Lord A."/>
            <person name="Norbertczak H."/>
            <person name="Ormond D."/>
            <person name="Price C."/>
            <person name="Rabbinowitsch E."/>
            <person name="Woodward J."/>
            <person name="Barrell B.G."/>
            <person name="Parkhill J."/>
        </authorList>
    </citation>
    <scope>NUCLEOTIDE SEQUENCE [LARGE SCALE GENOMIC DNA]</scope>
    <source>
        <strain>ATCC 25285 / DSM 2151 / CCUG 4856 / JCM 11019 / LMG 10263 / NCTC 9343 / Onslow / VPI 2553 / EN-2</strain>
    </source>
</reference>
<sequence>MATRIRLQRHGRKSYAFYSIVIADSRAPRDGKFTEKIGTYNPNTNPATVDLNFERALHWVLVGAQPSDTVRNILSREGVYMKKHLLGGVAKGAFGEAEAEAKFEAWKNNKQSGLSALKAKEEEAKKAEAKARLEAEKKVNEVKAKALAEKKAAEEAAKAAAEAPAEEAAPAEEAATEAAAE</sequence>
<organism>
    <name type="scientific">Bacteroides fragilis (strain ATCC 25285 / DSM 2151 / CCUG 4856 / JCM 11019 / LMG 10263 / NCTC 9343 / Onslow / VPI 2553 / EN-2)</name>
    <dbReference type="NCBI Taxonomy" id="272559"/>
    <lineage>
        <taxon>Bacteria</taxon>
        <taxon>Pseudomonadati</taxon>
        <taxon>Bacteroidota</taxon>
        <taxon>Bacteroidia</taxon>
        <taxon>Bacteroidales</taxon>
        <taxon>Bacteroidaceae</taxon>
        <taxon>Bacteroides</taxon>
    </lineage>
</organism>
<gene>
    <name evidence="1" type="primary">rpsP</name>
    <name type="ordered locus">BF2731</name>
</gene>
<comment type="similarity">
    <text evidence="1">Belongs to the bacterial ribosomal protein bS16 family.</text>
</comment>
<accession>Q5LBU1</accession>
<proteinExistence type="inferred from homology"/>
<protein>
    <recommendedName>
        <fullName evidence="1">Small ribosomal subunit protein bS16</fullName>
    </recommendedName>
    <alternativeName>
        <fullName evidence="3">30S ribosomal protein S16</fullName>
    </alternativeName>
</protein>